<name>RS10_METJA</name>
<keyword id="KW-1185">Reference proteome</keyword>
<keyword id="KW-0687">Ribonucleoprotein</keyword>
<keyword id="KW-0689">Ribosomal protein</keyword>
<gene>
    <name evidence="1" type="primary">rps10</name>
    <name type="ordered locus">MJ0322</name>
</gene>
<proteinExistence type="inferred from homology"/>
<dbReference type="EMBL" id="L77117">
    <property type="protein sequence ID" value="AAB98306.1"/>
    <property type="status" value="ALT_INIT"/>
    <property type="molecule type" value="Genomic_DNA"/>
</dbReference>
<dbReference type="PIR" id="C64340">
    <property type="entry name" value="C64340"/>
</dbReference>
<dbReference type="RefSeq" id="WP_048201890.1">
    <property type="nucleotide sequence ID" value="NC_000909.1"/>
</dbReference>
<dbReference type="SMR" id="P54029"/>
<dbReference type="FunCoup" id="P54029">
    <property type="interactions" value="161"/>
</dbReference>
<dbReference type="STRING" id="243232.MJ_0322"/>
<dbReference type="PaxDb" id="243232-MJ_0322"/>
<dbReference type="EnsemblBacteria" id="AAB98306">
    <property type="protein sequence ID" value="AAB98306"/>
    <property type="gene ID" value="MJ_0322"/>
</dbReference>
<dbReference type="GeneID" id="24891501"/>
<dbReference type="KEGG" id="mja:MJ_0322"/>
<dbReference type="eggNOG" id="arCOG01758">
    <property type="taxonomic scope" value="Archaea"/>
</dbReference>
<dbReference type="HOGENOM" id="CLU_122625_0_1_2"/>
<dbReference type="InParanoid" id="P54029"/>
<dbReference type="OrthoDB" id="371736at2157"/>
<dbReference type="PhylomeDB" id="P54029"/>
<dbReference type="Proteomes" id="UP000000805">
    <property type="component" value="Chromosome"/>
</dbReference>
<dbReference type="GO" id="GO:0022627">
    <property type="term" value="C:cytosolic small ribosomal subunit"/>
    <property type="evidence" value="ECO:0000318"/>
    <property type="project" value="GO_Central"/>
</dbReference>
<dbReference type="GO" id="GO:0003735">
    <property type="term" value="F:structural constituent of ribosome"/>
    <property type="evidence" value="ECO:0000318"/>
    <property type="project" value="GO_Central"/>
</dbReference>
<dbReference type="GO" id="GO:0000049">
    <property type="term" value="F:tRNA binding"/>
    <property type="evidence" value="ECO:0007669"/>
    <property type="project" value="UniProtKB-UniRule"/>
</dbReference>
<dbReference type="GO" id="GO:0006412">
    <property type="term" value="P:translation"/>
    <property type="evidence" value="ECO:0007669"/>
    <property type="project" value="UniProtKB-UniRule"/>
</dbReference>
<dbReference type="FunFam" id="3.30.70.600:FF:000004">
    <property type="entry name" value="30S ribosomal protein S10"/>
    <property type="match status" value="1"/>
</dbReference>
<dbReference type="Gene3D" id="3.30.70.600">
    <property type="entry name" value="Ribosomal protein S10 domain"/>
    <property type="match status" value="1"/>
</dbReference>
<dbReference type="HAMAP" id="MF_00508">
    <property type="entry name" value="Ribosomal_uS10"/>
    <property type="match status" value="1"/>
</dbReference>
<dbReference type="InterPro" id="IPR001848">
    <property type="entry name" value="Ribosomal_uS10"/>
</dbReference>
<dbReference type="InterPro" id="IPR018268">
    <property type="entry name" value="Ribosomal_uS10_CS"/>
</dbReference>
<dbReference type="InterPro" id="IPR027486">
    <property type="entry name" value="Ribosomal_uS10_dom"/>
</dbReference>
<dbReference type="InterPro" id="IPR036838">
    <property type="entry name" value="Ribosomal_uS10_dom_sf"/>
</dbReference>
<dbReference type="InterPro" id="IPR005729">
    <property type="entry name" value="Ribosomal_uS10_euk/arc"/>
</dbReference>
<dbReference type="NCBIfam" id="TIGR01046">
    <property type="entry name" value="uS10_euk_arch"/>
    <property type="match status" value="1"/>
</dbReference>
<dbReference type="PANTHER" id="PTHR11700">
    <property type="entry name" value="30S RIBOSOMAL PROTEIN S10 FAMILY MEMBER"/>
    <property type="match status" value="1"/>
</dbReference>
<dbReference type="Pfam" id="PF00338">
    <property type="entry name" value="Ribosomal_S10"/>
    <property type="match status" value="1"/>
</dbReference>
<dbReference type="PRINTS" id="PR00971">
    <property type="entry name" value="RIBOSOMALS10"/>
</dbReference>
<dbReference type="SMART" id="SM01403">
    <property type="entry name" value="Ribosomal_S10"/>
    <property type="match status" value="1"/>
</dbReference>
<dbReference type="SUPFAM" id="SSF54999">
    <property type="entry name" value="Ribosomal protein S10"/>
    <property type="match status" value="1"/>
</dbReference>
<dbReference type="PROSITE" id="PS00361">
    <property type="entry name" value="RIBOSOMAL_S10"/>
    <property type="match status" value="1"/>
</dbReference>
<accession>P54029</accession>
<evidence type="ECO:0000255" key="1">
    <source>
        <dbReference type="HAMAP-Rule" id="MF_00508"/>
    </source>
</evidence>
<evidence type="ECO:0000305" key="2"/>
<reference key="1">
    <citation type="journal article" date="1996" name="Science">
        <title>Complete genome sequence of the methanogenic archaeon, Methanococcus jannaschii.</title>
        <authorList>
            <person name="Bult C.J."/>
            <person name="White O."/>
            <person name="Olsen G.J."/>
            <person name="Zhou L."/>
            <person name="Fleischmann R.D."/>
            <person name="Sutton G.G."/>
            <person name="Blake J.A."/>
            <person name="FitzGerald L.M."/>
            <person name="Clayton R.A."/>
            <person name="Gocayne J.D."/>
            <person name="Kerlavage A.R."/>
            <person name="Dougherty B.A."/>
            <person name="Tomb J.-F."/>
            <person name="Adams M.D."/>
            <person name="Reich C.I."/>
            <person name="Overbeek R."/>
            <person name="Kirkness E.F."/>
            <person name="Weinstock K.G."/>
            <person name="Merrick J.M."/>
            <person name="Glodek A."/>
            <person name="Scott J.L."/>
            <person name="Geoghagen N.S.M."/>
            <person name="Weidman J.F."/>
            <person name="Fuhrmann J.L."/>
            <person name="Nguyen D."/>
            <person name="Utterback T.R."/>
            <person name="Kelley J.M."/>
            <person name="Peterson J.D."/>
            <person name="Sadow P.W."/>
            <person name="Hanna M.C."/>
            <person name="Cotton M.D."/>
            <person name="Roberts K.M."/>
            <person name="Hurst M.A."/>
            <person name="Kaine B.P."/>
            <person name="Borodovsky M."/>
            <person name="Klenk H.-P."/>
            <person name="Fraser C.M."/>
            <person name="Smith H.O."/>
            <person name="Woese C.R."/>
            <person name="Venter J.C."/>
        </authorList>
    </citation>
    <scope>NUCLEOTIDE SEQUENCE [LARGE SCALE GENOMIC DNA]</scope>
    <source>
        <strain>ATCC 43067 / DSM 2661 / JAL-1 / JCM 10045 / NBRC 100440</strain>
    </source>
</reference>
<organism>
    <name type="scientific">Methanocaldococcus jannaschii (strain ATCC 43067 / DSM 2661 / JAL-1 / JCM 10045 / NBRC 100440)</name>
    <name type="common">Methanococcus jannaschii</name>
    <dbReference type="NCBI Taxonomy" id="243232"/>
    <lineage>
        <taxon>Archaea</taxon>
        <taxon>Methanobacteriati</taxon>
        <taxon>Methanobacteriota</taxon>
        <taxon>Methanomada group</taxon>
        <taxon>Methanococci</taxon>
        <taxon>Methanococcales</taxon>
        <taxon>Methanocaldococcaceae</taxon>
        <taxon>Methanocaldococcus</taxon>
    </lineage>
</organism>
<feature type="chain" id="PRO_0000146646" description="Small ribosomal subunit protein uS10">
    <location>
        <begin position="1"/>
        <end position="101"/>
    </location>
</feature>
<protein>
    <recommendedName>
        <fullName evidence="1">Small ribosomal subunit protein uS10</fullName>
    </recommendedName>
    <alternativeName>
        <fullName evidence="2">30S ribosomal protein S10</fullName>
    </alternativeName>
</protein>
<comment type="function">
    <text evidence="1">Involved in the binding of tRNA to the ribosomes.</text>
</comment>
<comment type="subunit">
    <text evidence="1">Part of the 30S ribosomal subunit.</text>
</comment>
<comment type="similarity">
    <text evidence="1">Belongs to the universal ribosomal protein uS10 family.</text>
</comment>
<comment type="sequence caution" evidence="2">
    <conflict type="erroneous initiation">
        <sequence resource="EMBL-CDS" id="AAB98306"/>
    </conflict>
    <text>Extended N-terminus.</text>
</comment>
<sequence length="101" mass="11673">MQRARIKLSSTDHKVLDEICRQIKEIAEKTGVDISGPIPLPTKVLRVVTRKSPDGEGSSTFDRWTMKIHKRLIDIDADERALRHIMKIRIPDNVQIEIQFK</sequence>